<evidence type="ECO:0000255" key="1">
    <source>
        <dbReference type="HAMAP-Rule" id="MF_00050"/>
    </source>
</evidence>
<comment type="function">
    <text evidence="1">Associates with the EF-Tu.GDP complex and induces the exchange of GDP to GTP. It remains bound to the aminoacyl-tRNA.EF-Tu.GTP complex up to the GTP hydrolysis stage on the ribosome.</text>
</comment>
<comment type="subcellular location">
    <subcellularLocation>
        <location evidence="1">Cytoplasm</location>
    </subcellularLocation>
</comment>
<comment type="similarity">
    <text evidence="1">Belongs to the EF-Ts family.</text>
</comment>
<gene>
    <name evidence="1" type="primary">tsf</name>
    <name type="ordered locus">Pmob_1720</name>
</gene>
<accession>A9BIS5</accession>
<name>EFTS_PETMO</name>
<proteinExistence type="inferred from homology"/>
<protein>
    <recommendedName>
        <fullName evidence="1">Elongation factor Ts</fullName>
        <shortName evidence="1">EF-Ts</shortName>
    </recommendedName>
</protein>
<organism>
    <name type="scientific">Petrotoga mobilis (strain DSM 10674 / SJ95)</name>
    <dbReference type="NCBI Taxonomy" id="403833"/>
    <lineage>
        <taxon>Bacteria</taxon>
        <taxon>Thermotogati</taxon>
        <taxon>Thermotogota</taxon>
        <taxon>Thermotogae</taxon>
        <taxon>Petrotogales</taxon>
        <taxon>Petrotogaceae</taxon>
        <taxon>Petrotoga</taxon>
    </lineage>
</organism>
<keyword id="KW-0963">Cytoplasm</keyword>
<keyword id="KW-0251">Elongation factor</keyword>
<keyword id="KW-0648">Protein biosynthesis</keyword>
<feature type="chain" id="PRO_1000074871" description="Elongation factor Ts">
    <location>
        <begin position="1"/>
        <end position="197"/>
    </location>
</feature>
<feature type="region of interest" description="Involved in Mg(2+) ion dislocation from EF-Tu" evidence="1">
    <location>
        <begin position="81"/>
        <end position="84"/>
    </location>
</feature>
<sequence>MDVSIEKIKNLRASTGAGMLDCKNALEEADGDIDKAVEILRKKGAIKAAKKAGRVTNEGIVYSYIHHNEKIGVLLLLGCETDFVARTEDFHDLAKKISLQIASMNPKWISREDVPQEIIDKEKEIYLEELKNSNKPENIKEQIVENKLGKFYSENCLLEQEYVFGEGESIKDIIDSMIAKVGENITVDKFARFAIGE</sequence>
<reference key="1">
    <citation type="submission" date="2007-11" db="EMBL/GenBank/DDBJ databases">
        <title>Complete sequence of Petroga mobilis SJ95.</title>
        <authorList>
            <consortium name="US DOE Joint Genome Institute"/>
            <person name="Copeland A."/>
            <person name="Lucas S."/>
            <person name="Lapidus A."/>
            <person name="Barry K."/>
            <person name="Glavina del Rio T."/>
            <person name="Dalin E."/>
            <person name="Tice H."/>
            <person name="Pitluck S."/>
            <person name="Meincke L."/>
            <person name="Brettin T."/>
            <person name="Bruce D."/>
            <person name="Detter J.C."/>
            <person name="Han C."/>
            <person name="Kuske C.R."/>
            <person name="Schmutz J."/>
            <person name="Larimer F."/>
            <person name="Land M."/>
            <person name="Hauser L."/>
            <person name="Kyrpides N."/>
            <person name="Mikhailova N."/>
            <person name="Noll K."/>
            <person name="Richardson P."/>
        </authorList>
    </citation>
    <scope>NUCLEOTIDE SEQUENCE [LARGE SCALE GENOMIC DNA]</scope>
    <source>
        <strain>DSM 10674 / SJ95</strain>
    </source>
</reference>
<dbReference type="EMBL" id="CP000879">
    <property type="protein sequence ID" value="ABX32413.1"/>
    <property type="molecule type" value="Genomic_DNA"/>
</dbReference>
<dbReference type="RefSeq" id="WP_012209510.1">
    <property type="nucleotide sequence ID" value="NC_010003.1"/>
</dbReference>
<dbReference type="SMR" id="A9BIS5"/>
<dbReference type="STRING" id="403833.Pmob_1720"/>
<dbReference type="KEGG" id="pmo:Pmob_1720"/>
<dbReference type="eggNOG" id="COG0264">
    <property type="taxonomic scope" value="Bacteria"/>
</dbReference>
<dbReference type="HOGENOM" id="CLU_047155_1_1_0"/>
<dbReference type="OrthoDB" id="9808348at2"/>
<dbReference type="Proteomes" id="UP000000789">
    <property type="component" value="Chromosome"/>
</dbReference>
<dbReference type="GO" id="GO:0005737">
    <property type="term" value="C:cytoplasm"/>
    <property type="evidence" value="ECO:0007669"/>
    <property type="project" value="UniProtKB-SubCell"/>
</dbReference>
<dbReference type="GO" id="GO:0003746">
    <property type="term" value="F:translation elongation factor activity"/>
    <property type="evidence" value="ECO:0007669"/>
    <property type="project" value="UniProtKB-UniRule"/>
</dbReference>
<dbReference type="CDD" id="cd14275">
    <property type="entry name" value="UBA_EF-Ts"/>
    <property type="match status" value="1"/>
</dbReference>
<dbReference type="FunFam" id="1.10.286.20:FF:000001">
    <property type="entry name" value="Elongation factor Ts"/>
    <property type="match status" value="1"/>
</dbReference>
<dbReference type="FunFam" id="1.10.8.10:FF:000001">
    <property type="entry name" value="Elongation factor Ts"/>
    <property type="match status" value="1"/>
</dbReference>
<dbReference type="Gene3D" id="1.10.286.20">
    <property type="match status" value="1"/>
</dbReference>
<dbReference type="Gene3D" id="1.10.8.10">
    <property type="entry name" value="DNA helicase RuvA subunit, C-terminal domain"/>
    <property type="match status" value="1"/>
</dbReference>
<dbReference type="Gene3D" id="3.30.479.20">
    <property type="entry name" value="Elongation factor Ts, dimerisation domain"/>
    <property type="match status" value="1"/>
</dbReference>
<dbReference type="HAMAP" id="MF_00050">
    <property type="entry name" value="EF_Ts"/>
    <property type="match status" value="1"/>
</dbReference>
<dbReference type="InterPro" id="IPR036402">
    <property type="entry name" value="EF-Ts_dimer_sf"/>
</dbReference>
<dbReference type="InterPro" id="IPR001816">
    <property type="entry name" value="Transl_elong_EFTs/EF1B"/>
</dbReference>
<dbReference type="InterPro" id="IPR014039">
    <property type="entry name" value="Transl_elong_EFTs/EF1B_dimer"/>
</dbReference>
<dbReference type="InterPro" id="IPR018101">
    <property type="entry name" value="Transl_elong_Ts_CS"/>
</dbReference>
<dbReference type="InterPro" id="IPR009060">
    <property type="entry name" value="UBA-like_sf"/>
</dbReference>
<dbReference type="NCBIfam" id="TIGR00116">
    <property type="entry name" value="tsf"/>
    <property type="match status" value="1"/>
</dbReference>
<dbReference type="PANTHER" id="PTHR11741">
    <property type="entry name" value="ELONGATION FACTOR TS"/>
    <property type="match status" value="1"/>
</dbReference>
<dbReference type="PANTHER" id="PTHR11741:SF0">
    <property type="entry name" value="ELONGATION FACTOR TS, MITOCHONDRIAL"/>
    <property type="match status" value="1"/>
</dbReference>
<dbReference type="Pfam" id="PF00889">
    <property type="entry name" value="EF_TS"/>
    <property type="match status" value="1"/>
</dbReference>
<dbReference type="SUPFAM" id="SSF54713">
    <property type="entry name" value="Elongation factor Ts (EF-Ts), dimerisation domain"/>
    <property type="match status" value="1"/>
</dbReference>
<dbReference type="SUPFAM" id="SSF46934">
    <property type="entry name" value="UBA-like"/>
    <property type="match status" value="1"/>
</dbReference>
<dbReference type="PROSITE" id="PS01126">
    <property type="entry name" value="EF_TS_1"/>
    <property type="match status" value="1"/>
</dbReference>
<dbReference type="PROSITE" id="PS01127">
    <property type="entry name" value="EF_TS_2"/>
    <property type="match status" value="1"/>
</dbReference>